<dbReference type="EC" id="7.4.2.8" evidence="1"/>
<dbReference type="EMBL" id="CU468230">
    <property type="protein sequence ID" value="CAO99961.1"/>
    <property type="molecule type" value="Genomic_DNA"/>
</dbReference>
<dbReference type="SMR" id="B0VRG7"/>
<dbReference type="KEGG" id="abm:ABSDF0582"/>
<dbReference type="HOGENOM" id="CLU_005314_3_0_6"/>
<dbReference type="Proteomes" id="UP000001741">
    <property type="component" value="Chromosome"/>
</dbReference>
<dbReference type="GO" id="GO:0031522">
    <property type="term" value="C:cell envelope Sec protein transport complex"/>
    <property type="evidence" value="ECO:0007669"/>
    <property type="project" value="TreeGrafter"/>
</dbReference>
<dbReference type="GO" id="GO:0005829">
    <property type="term" value="C:cytosol"/>
    <property type="evidence" value="ECO:0007669"/>
    <property type="project" value="TreeGrafter"/>
</dbReference>
<dbReference type="GO" id="GO:0005886">
    <property type="term" value="C:plasma membrane"/>
    <property type="evidence" value="ECO:0007669"/>
    <property type="project" value="UniProtKB-SubCell"/>
</dbReference>
<dbReference type="GO" id="GO:0005524">
    <property type="term" value="F:ATP binding"/>
    <property type="evidence" value="ECO:0007669"/>
    <property type="project" value="UniProtKB-UniRule"/>
</dbReference>
<dbReference type="GO" id="GO:0046872">
    <property type="term" value="F:metal ion binding"/>
    <property type="evidence" value="ECO:0007669"/>
    <property type="project" value="UniProtKB-KW"/>
</dbReference>
<dbReference type="GO" id="GO:0008564">
    <property type="term" value="F:protein-exporting ATPase activity"/>
    <property type="evidence" value="ECO:0007669"/>
    <property type="project" value="UniProtKB-EC"/>
</dbReference>
<dbReference type="GO" id="GO:0065002">
    <property type="term" value="P:intracellular protein transmembrane transport"/>
    <property type="evidence" value="ECO:0007669"/>
    <property type="project" value="UniProtKB-UniRule"/>
</dbReference>
<dbReference type="GO" id="GO:0017038">
    <property type="term" value="P:protein import"/>
    <property type="evidence" value="ECO:0007669"/>
    <property type="project" value="InterPro"/>
</dbReference>
<dbReference type="GO" id="GO:0006605">
    <property type="term" value="P:protein targeting"/>
    <property type="evidence" value="ECO:0007669"/>
    <property type="project" value="UniProtKB-UniRule"/>
</dbReference>
<dbReference type="GO" id="GO:0043952">
    <property type="term" value="P:protein transport by the Sec complex"/>
    <property type="evidence" value="ECO:0007669"/>
    <property type="project" value="TreeGrafter"/>
</dbReference>
<dbReference type="CDD" id="cd17928">
    <property type="entry name" value="DEXDc_SecA"/>
    <property type="match status" value="1"/>
</dbReference>
<dbReference type="CDD" id="cd18803">
    <property type="entry name" value="SF2_C_secA"/>
    <property type="match status" value="1"/>
</dbReference>
<dbReference type="FunFam" id="3.40.50.300:FF:000113">
    <property type="entry name" value="Preprotein translocase subunit SecA"/>
    <property type="match status" value="1"/>
</dbReference>
<dbReference type="FunFam" id="3.90.1440.10:FF:000001">
    <property type="entry name" value="Preprotein translocase subunit SecA"/>
    <property type="match status" value="1"/>
</dbReference>
<dbReference type="FunFam" id="1.10.3060.10:FF:000003">
    <property type="entry name" value="Protein translocase subunit SecA"/>
    <property type="match status" value="1"/>
</dbReference>
<dbReference type="Gene3D" id="1.10.3060.10">
    <property type="entry name" value="Helical scaffold and wing domains of SecA"/>
    <property type="match status" value="1"/>
</dbReference>
<dbReference type="Gene3D" id="3.40.50.300">
    <property type="entry name" value="P-loop containing nucleotide triphosphate hydrolases"/>
    <property type="match status" value="2"/>
</dbReference>
<dbReference type="Gene3D" id="3.90.1440.10">
    <property type="entry name" value="SecA, preprotein cross-linking domain"/>
    <property type="match status" value="1"/>
</dbReference>
<dbReference type="HAMAP" id="MF_01382">
    <property type="entry name" value="SecA"/>
    <property type="match status" value="1"/>
</dbReference>
<dbReference type="InterPro" id="IPR014001">
    <property type="entry name" value="Helicase_ATP-bd"/>
</dbReference>
<dbReference type="InterPro" id="IPR001650">
    <property type="entry name" value="Helicase_C-like"/>
</dbReference>
<dbReference type="InterPro" id="IPR027417">
    <property type="entry name" value="P-loop_NTPase"/>
</dbReference>
<dbReference type="InterPro" id="IPR004027">
    <property type="entry name" value="SEC_C_motif"/>
</dbReference>
<dbReference type="InterPro" id="IPR000185">
    <property type="entry name" value="SecA"/>
</dbReference>
<dbReference type="InterPro" id="IPR020937">
    <property type="entry name" value="SecA_CS"/>
</dbReference>
<dbReference type="InterPro" id="IPR011115">
    <property type="entry name" value="SecA_DEAD"/>
</dbReference>
<dbReference type="InterPro" id="IPR014018">
    <property type="entry name" value="SecA_motor_DEAD"/>
</dbReference>
<dbReference type="InterPro" id="IPR011130">
    <property type="entry name" value="SecA_preprotein_X-link_dom"/>
</dbReference>
<dbReference type="InterPro" id="IPR044722">
    <property type="entry name" value="SecA_SF2_C"/>
</dbReference>
<dbReference type="InterPro" id="IPR011116">
    <property type="entry name" value="SecA_Wing/Scaffold"/>
</dbReference>
<dbReference type="InterPro" id="IPR036266">
    <property type="entry name" value="SecA_Wing/Scaffold_sf"/>
</dbReference>
<dbReference type="InterPro" id="IPR036670">
    <property type="entry name" value="SecA_X-link_sf"/>
</dbReference>
<dbReference type="NCBIfam" id="NF009538">
    <property type="entry name" value="PRK12904.1"/>
    <property type="match status" value="1"/>
</dbReference>
<dbReference type="NCBIfam" id="TIGR00963">
    <property type="entry name" value="secA"/>
    <property type="match status" value="1"/>
</dbReference>
<dbReference type="PANTHER" id="PTHR30612:SF0">
    <property type="entry name" value="CHLOROPLAST PROTEIN-TRANSPORTING ATPASE"/>
    <property type="match status" value="1"/>
</dbReference>
<dbReference type="PANTHER" id="PTHR30612">
    <property type="entry name" value="SECA INNER MEMBRANE COMPONENT OF SEC PROTEIN SECRETION SYSTEM"/>
    <property type="match status" value="1"/>
</dbReference>
<dbReference type="Pfam" id="PF21090">
    <property type="entry name" value="P-loop_SecA"/>
    <property type="match status" value="1"/>
</dbReference>
<dbReference type="Pfam" id="PF02810">
    <property type="entry name" value="SEC-C"/>
    <property type="match status" value="1"/>
</dbReference>
<dbReference type="Pfam" id="PF07517">
    <property type="entry name" value="SecA_DEAD"/>
    <property type="match status" value="1"/>
</dbReference>
<dbReference type="Pfam" id="PF01043">
    <property type="entry name" value="SecA_PP_bind"/>
    <property type="match status" value="1"/>
</dbReference>
<dbReference type="Pfam" id="PF07516">
    <property type="entry name" value="SecA_SW"/>
    <property type="match status" value="1"/>
</dbReference>
<dbReference type="PRINTS" id="PR00906">
    <property type="entry name" value="SECA"/>
</dbReference>
<dbReference type="SMART" id="SM00957">
    <property type="entry name" value="SecA_DEAD"/>
    <property type="match status" value="1"/>
</dbReference>
<dbReference type="SMART" id="SM00958">
    <property type="entry name" value="SecA_PP_bind"/>
    <property type="match status" value="1"/>
</dbReference>
<dbReference type="SUPFAM" id="SSF81886">
    <property type="entry name" value="Helical scaffold and wing domains of SecA"/>
    <property type="match status" value="1"/>
</dbReference>
<dbReference type="SUPFAM" id="SSF52540">
    <property type="entry name" value="P-loop containing nucleoside triphosphate hydrolases"/>
    <property type="match status" value="2"/>
</dbReference>
<dbReference type="SUPFAM" id="SSF81767">
    <property type="entry name" value="Pre-protein crosslinking domain of SecA"/>
    <property type="match status" value="1"/>
</dbReference>
<dbReference type="PROSITE" id="PS01312">
    <property type="entry name" value="SECA"/>
    <property type="match status" value="1"/>
</dbReference>
<dbReference type="PROSITE" id="PS51196">
    <property type="entry name" value="SECA_MOTOR_DEAD"/>
    <property type="match status" value="1"/>
</dbReference>
<reference key="1">
    <citation type="journal article" date="2008" name="PLoS ONE">
        <title>Comparative analysis of Acinetobacters: three genomes for three lifestyles.</title>
        <authorList>
            <person name="Vallenet D."/>
            <person name="Nordmann P."/>
            <person name="Barbe V."/>
            <person name="Poirel L."/>
            <person name="Mangenot S."/>
            <person name="Bataille E."/>
            <person name="Dossat C."/>
            <person name="Gas S."/>
            <person name="Kreimeyer A."/>
            <person name="Lenoble P."/>
            <person name="Oztas S."/>
            <person name="Poulain J."/>
            <person name="Segurens B."/>
            <person name="Robert C."/>
            <person name="Abergel C."/>
            <person name="Claverie J.-M."/>
            <person name="Raoult D."/>
            <person name="Medigue C."/>
            <person name="Weissenbach J."/>
            <person name="Cruveiller S."/>
        </authorList>
    </citation>
    <scope>NUCLEOTIDE SEQUENCE [LARGE SCALE GENOMIC DNA]</scope>
    <source>
        <strain>SDF</strain>
    </source>
</reference>
<keyword id="KW-0067">ATP-binding</keyword>
<keyword id="KW-0997">Cell inner membrane</keyword>
<keyword id="KW-1003">Cell membrane</keyword>
<keyword id="KW-0963">Cytoplasm</keyword>
<keyword id="KW-0472">Membrane</keyword>
<keyword id="KW-0479">Metal-binding</keyword>
<keyword id="KW-0547">Nucleotide-binding</keyword>
<keyword id="KW-0653">Protein transport</keyword>
<keyword id="KW-1278">Translocase</keyword>
<keyword id="KW-0811">Translocation</keyword>
<keyword id="KW-0813">Transport</keyword>
<keyword id="KW-0862">Zinc</keyword>
<gene>
    <name evidence="1" type="primary">secA</name>
    <name type="ordered locus">ABSDF0582</name>
</gene>
<sequence length="911" mass="102891">MLASLIGGIFGTKNERELKRMRKIVEQINALEPTISALSDADLSAKTPEFKQRYNNGESLDKLLPEAFAVCREAAKRVMGMRHYDVQLIGGITLHEGKIAEMRTGEGKTLMGTLACYLNALSGEGVHVITVNDYLAQRDAELNRPLFEFLGLSIGTIYSMQEPAEKAAAYLADITYGTNNEFGFDYLRDNMVFSLAEKKQRGLHYAIIDEVDSILIDEARTPLIISGQSEDSSHLYTAINTIPPKLRPQKEEKVADGGHFWIDEKQRSVEMTEIGYETVEQELIQMGLLAEGESLYSATNLNLVHHVSAAIRAHVLFQRDVHYIIHDGEVVIVDEHTGRTMPGRRWSEGLHQAVEAKEGLAIQPENQTLATTTFQNYFRPYKKLSGMTGTADTEAAEMKEIYGLDVVIIPTHRPMIRNDQNDLIYLNRNGKYNAIIQEIMNIRQQGVAPILIGTATIEASEILSSKLKQAGIHHEVLNAKQHEREADIIAQAGSPNAVTIATNMAGRGTDIILGGNWKAKLAKLENPTPEDEARLKAQWEQDHEDVLQAGGLHIIGSERHESRRIDNQLRGRAGRQGDPGVSRFYLSLEDDLMRIFAGDRVVAMMRAMGLKEDEAIEHKMVSRSIENAQRKVEARNFDIRKNLLKYDDVNNEQRKIIYSQRDEILAENTLQEYVEEMHREVMQAMIANFIPPESIHDQWDVEGLENALRIDLGIELPVQEWLEQDRRLDEEGLVERISDEVIARYRQRRAQMGDESAAMLERHFVLNSLDRHWKDHLAAMDYLRQGIHLRGYAQKNPEQEYKKESFNLFVNMLGVIKTDVVTDLVTDLSRVHIPTPEELAEMEAQQQQQAEAMKLSFEHDDVDGLTGEVTASQEALNESATEQQTFPVPESRNAPCPCGSGLKYKQCHGKI</sequence>
<protein>
    <recommendedName>
        <fullName evidence="1">Protein translocase subunit SecA</fullName>
        <ecNumber evidence="1">7.4.2.8</ecNumber>
    </recommendedName>
</protein>
<proteinExistence type="inferred from homology"/>
<comment type="function">
    <text evidence="1">Part of the Sec protein translocase complex. Interacts with the SecYEG preprotein conducting channel. Has a central role in coupling the hydrolysis of ATP to the transfer of proteins into and across the cell membrane, serving both as a receptor for the preprotein-SecB complex and as an ATP-driven molecular motor driving the stepwise translocation of polypeptide chains across the membrane.</text>
</comment>
<comment type="catalytic activity">
    <reaction evidence="1">
        <text>ATP + H2O + cellular proteinSide 1 = ADP + phosphate + cellular proteinSide 2.</text>
        <dbReference type="EC" id="7.4.2.8"/>
    </reaction>
</comment>
<comment type="cofactor">
    <cofactor evidence="1">
        <name>Zn(2+)</name>
        <dbReference type="ChEBI" id="CHEBI:29105"/>
    </cofactor>
    <text evidence="1">May bind 1 zinc ion per subunit.</text>
</comment>
<comment type="subunit">
    <text evidence="1">Monomer and homodimer. Part of the essential Sec protein translocation apparatus which comprises SecA, SecYEG and auxiliary proteins SecDF-YajC and YidC.</text>
</comment>
<comment type="subcellular location">
    <subcellularLocation>
        <location evidence="1">Cell inner membrane</location>
        <topology evidence="1">Peripheral membrane protein</topology>
        <orientation evidence="1">Cytoplasmic side</orientation>
    </subcellularLocation>
    <subcellularLocation>
        <location evidence="1">Cytoplasm</location>
    </subcellularLocation>
    <text evidence="1">Distribution is 50-50.</text>
</comment>
<comment type="similarity">
    <text evidence="1">Belongs to the SecA family.</text>
</comment>
<feature type="chain" id="PRO_1000144964" description="Protein translocase subunit SecA">
    <location>
        <begin position="1"/>
        <end position="911"/>
    </location>
</feature>
<feature type="binding site" evidence="1">
    <location>
        <position position="87"/>
    </location>
    <ligand>
        <name>ATP</name>
        <dbReference type="ChEBI" id="CHEBI:30616"/>
    </ligand>
</feature>
<feature type="binding site" evidence="1">
    <location>
        <begin position="105"/>
        <end position="109"/>
    </location>
    <ligand>
        <name>ATP</name>
        <dbReference type="ChEBI" id="CHEBI:30616"/>
    </ligand>
</feature>
<feature type="binding site" evidence="1">
    <location>
        <position position="510"/>
    </location>
    <ligand>
        <name>ATP</name>
        <dbReference type="ChEBI" id="CHEBI:30616"/>
    </ligand>
</feature>
<feature type="binding site" evidence="1">
    <location>
        <position position="896"/>
    </location>
    <ligand>
        <name>Zn(2+)</name>
        <dbReference type="ChEBI" id="CHEBI:29105"/>
    </ligand>
</feature>
<feature type="binding site" evidence="1">
    <location>
        <position position="898"/>
    </location>
    <ligand>
        <name>Zn(2+)</name>
        <dbReference type="ChEBI" id="CHEBI:29105"/>
    </ligand>
</feature>
<feature type="binding site" evidence="1">
    <location>
        <position position="907"/>
    </location>
    <ligand>
        <name>Zn(2+)</name>
        <dbReference type="ChEBI" id="CHEBI:29105"/>
    </ligand>
</feature>
<feature type="binding site" evidence="1">
    <location>
        <position position="908"/>
    </location>
    <ligand>
        <name>Zn(2+)</name>
        <dbReference type="ChEBI" id="CHEBI:29105"/>
    </ligand>
</feature>
<organism>
    <name type="scientific">Acinetobacter baumannii (strain SDF)</name>
    <dbReference type="NCBI Taxonomy" id="509170"/>
    <lineage>
        <taxon>Bacteria</taxon>
        <taxon>Pseudomonadati</taxon>
        <taxon>Pseudomonadota</taxon>
        <taxon>Gammaproteobacteria</taxon>
        <taxon>Moraxellales</taxon>
        <taxon>Moraxellaceae</taxon>
        <taxon>Acinetobacter</taxon>
        <taxon>Acinetobacter calcoaceticus/baumannii complex</taxon>
    </lineage>
</organism>
<evidence type="ECO:0000255" key="1">
    <source>
        <dbReference type="HAMAP-Rule" id="MF_01382"/>
    </source>
</evidence>
<accession>B0VRG7</accession>
<name>SECA_ACIBS</name>